<feature type="chain" id="PRO_1000138176" description="Flagellar protein FliT">
    <location>
        <begin position="1"/>
        <end position="121"/>
    </location>
</feature>
<feature type="region of interest" description="Required for homodimerization" evidence="1">
    <location>
        <begin position="1"/>
        <end position="50"/>
    </location>
</feature>
<feature type="region of interest" description="FliD binding" evidence="1">
    <location>
        <begin position="60"/>
        <end position="98"/>
    </location>
</feature>
<organism>
    <name type="scientific">Escherichia coli O157:H7 (strain EC4115 / EHEC)</name>
    <dbReference type="NCBI Taxonomy" id="444450"/>
    <lineage>
        <taxon>Bacteria</taxon>
        <taxon>Pseudomonadati</taxon>
        <taxon>Pseudomonadota</taxon>
        <taxon>Gammaproteobacteria</taxon>
        <taxon>Enterobacterales</taxon>
        <taxon>Enterobacteriaceae</taxon>
        <taxon>Escherichia</taxon>
    </lineage>
</organism>
<accession>B5YRV3</accession>
<comment type="function">
    <text evidence="1">Dual-function protein that regulates the transcription of class 2 flagellar operons and that also acts as an export chaperone for the filament-capping protein FliD. As a transcriptional regulator, acts as an anti-FlhDC factor; it directly binds FlhC, thus inhibiting the binding of the FlhC/FlhD complex to class 2 promoters, resulting in decreased expression of class 2 flagellar operons. As a chaperone, effects FliD transition to the membrane by preventing its premature polymerization, and by directing it to the export apparatus.</text>
</comment>
<comment type="subunit">
    <text evidence="1">Homodimer. Interacts with FliD and FlhC.</text>
</comment>
<comment type="subcellular location">
    <subcellularLocation>
        <location evidence="1">Cytoplasm</location>
        <location evidence="1">Cytosol</location>
    </subcellularLocation>
</comment>
<comment type="similarity">
    <text evidence="1">Belongs to the FliT family.</text>
</comment>
<reference key="1">
    <citation type="journal article" date="2011" name="Proc. Natl. Acad. Sci. U.S.A.">
        <title>Genomic anatomy of Escherichia coli O157:H7 outbreaks.</title>
        <authorList>
            <person name="Eppinger M."/>
            <person name="Mammel M.K."/>
            <person name="Leclerc J.E."/>
            <person name="Ravel J."/>
            <person name="Cebula T.A."/>
        </authorList>
    </citation>
    <scope>NUCLEOTIDE SEQUENCE [LARGE SCALE GENOMIC DNA]</scope>
    <source>
        <strain>EC4115 / EHEC</strain>
    </source>
</reference>
<gene>
    <name evidence="1" type="primary">fliT</name>
    <name type="ordered locus">ECH74115_2701</name>
</gene>
<evidence type="ECO:0000255" key="1">
    <source>
        <dbReference type="HAMAP-Rule" id="MF_01180"/>
    </source>
</evidence>
<sequence length="121" mass="13829">MNHAPHLYFAWQQLVEKSQLMLRLATEEQWDELIASEMAYVNAVQEIAHLTEEVDPSTTMQEQLRPMLRLILDNESKVKQLLQIRMDELAKLVGQSSVQKSVLSAYGDQGGFVLAPQDNLF</sequence>
<name>FLIT_ECO5E</name>
<proteinExistence type="inferred from homology"/>
<keyword id="KW-1005">Bacterial flagellum biogenesis</keyword>
<keyword id="KW-0143">Chaperone</keyword>
<keyword id="KW-0963">Cytoplasm</keyword>
<keyword id="KW-0678">Repressor</keyword>
<keyword id="KW-0804">Transcription</keyword>
<keyword id="KW-0805">Transcription regulation</keyword>
<dbReference type="EMBL" id="CP001164">
    <property type="protein sequence ID" value="ACI38132.1"/>
    <property type="molecule type" value="Genomic_DNA"/>
</dbReference>
<dbReference type="RefSeq" id="WP_001015033.1">
    <property type="nucleotide sequence ID" value="NC_011353.1"/>
</dbReference>
<dbReference type="SMR" id="B5YRV3"/>
<dbReference type="GeneID" id="75172048"/>
<dbReference type="KEGG" id="ecf:ECH74115_2701"/>
<dbReference type="HOGENOM" id="CLU_155793_1_1_6"/>
<dbReference type="GO" id="GO:0005829">
    <property type="term" value="C:cytosol"/>
    <property type="evidence" value="ECO:0007669"/>
    <property type="project" value="UniProtKB-SubCell"/>
</dbReference>
<dbReference type="GO" id="GO:0044781">
    <property type="term" value="P:bacterial-type flagellum organization"/>
    <property type="evidence" value="ECO:0007669"/>
    <property type="project" value="UniProtKB-KW"/>
</dbReference>
<dbReference type="GO" id="GO:1902209">
    <property type="term" value="P:negative regulation of bacterial-type flagellum assembly"/>
    <property type="evidence" value="ECO:0007669"/>
    <property type="project" value="UniProtKB-UniRule"/>
</dbReference>
<dbReference type="GO" id="GO:0006457">
    <property type="term" value="P:protein folding"/>
    <property type="evidence" value="ECO:0007669"/>
    <property type="project" value="UniProtKB-UniRule"/>
</dbReference>
<dbReference type="FunFam" id="1.20.58.380:FF:000001">
    <property type="entry name" value="Flagellar protein FliT"/>
    <property type="match status" value="1"/>
</dbReference>
<dbReference type="Gene3D" id="1.20.58.380">
    <property type="entry name" value="Flagellar protein flit"/>
    <property type="match status" value="1"/>
</dbReference>
<dbReference type="HAMAP" id="MF_01180">
    <property type="entry name" value="FliT"/>
    <property type="match status" value="1"/>
</dbReference>
<dbReference type="InterPro" id="IPR008622">
    <property type="entry name" value="FliT"/>
</dbReference>
<dbReference type="NCBIfam" id="NF007836">
    <property type="entry name" value="PRK10548.1"/>
    <property type="match status" value="1"/>
</dbReference>
<dbReference type="Pfam" id="PF05400">
    <property type="entry name" value="FliT"/>
    <property type="match status" value="1"/>
</dbReference>
<protein>
    <recommendedName>
        <fullName evidence="1">Flagellar protein FliT</fullName>
    </recommendedName>
</protein>